<organism>
    <name type="scientific">Burkholderia thailandensis (strain ATCC 700388 / DSM 13276 / CCUG 48851 / CIP 106301 / E264)</name>
    <dbReference type="NCBI Taxonomy" id="271848"/>
    <lineage>
        <taxon>Bacteria</taxon>
        <taxon>Pseudomonadati</taxon>
        <taxon>Pseudomonadota</taxon>
        <taxon>Betaproteobacteria</taxon>
        <taxon>Burkholderiales</taxon>
        <taxon>Burkholderiaceae</taxon>
        <taxon>Burkholderia</taxon>
        <taxon>pseudomallei group</taxon>
    </lineage>
</organism>
<evidence type="ECO:0000255" key="1">
    <source>
        <dbReference type="HAMAP-Rule" id="MF_01384"/>
    </source>
</evidence>
<evidence type="ECO:0000305" key="2"/>
<sequence>MSAHDPHASLARPAAKAWHARLELGFERQPGGRTALAHRRHVGPLRVQRALYPEGDAICHAVIVHPPGGVAGGDRLEIDVKLDAGTHAVLTTPGATKWYKSNGLDARQRIDIDVGARAKLDWLPQNNLFFDATHASLEFVLKLGDGASVLGWDAAQLGRQAAGEAWSTGSVASFSKIVGPSGRALWVERARLDARDPLRAAPQGLGGFPVYGTLWALGPACTNALAESIAPALPFDDALRAGVTCIAPGTMLIRALAHSMEALQHLFAEQWLALRPIVHGIDAKPLRLWQT</sequence>
<keyword id="KW-0143">Chaperone</keyword>
<keyword id="KW-0963">Cytoplasm</keyword>
<keyword id="KW-0996">Nickel insertion</keyword>
<gene>
    <name evidence="1" type="primary">ureD</name>
    <name type="ordered locus">BTH_I1499</name>
</gene>
<name>URED_BURTA</name>
<reference key="1">
    <citation type="journal article" date="2005" name="BMC Genomics">
        <title>Bacterial genome adaptation to niches: divergence of the potential virulence genes in three Burkholderia species of different survival strategies.</title>
        <authorList>
            <person name="Kim H.S."/>
            <person name="Schell M.A."/>
            <person name="Yu Y."/>
            <person name="Ulrich R.L."/>
            <person name="Sarria S.H."/>
            <person name="Nierman W.C."/>
            <person name="DeShazer D."/>
        </authorList>
    </citation>
    <scope>NUCLEOTIDE SEQUENCE [LARGE SCALE GENOMIC DNA]</scope>
    <source>
        <strain>ATCC 700388 / DSM 13276 / CCUG 48851 / CIP 106301 / E264</strain>
    </source>
</reference>
<protein>
    <recommendedName>
        <fullName evidence="1">Urease accessory protein UreD</fullName>
    </recommendedName>
</protein>
<proteinExistence type="inferred from homology"/>
<accession>Q2SYF4</accession>
<feature type="chain" id="PRO_0000340442" description="Urease accessory protein UreD">
    <location>
        <begin position="1"/>
        <end position="291"/>
    </location>
</feature>
<dbReference type="EMBL" id="CP000086">
    <property type="protein sequence ID" value="ABC38588.1"/>
    <property type="status" value="ALT_INIT"/>
    <property type="molecule type" value="Genomic_DNA"/>
</dbReference>
<dbReference type="RefSeq" id="WP_009889616.1">
    <property type="nucleotide sequence ID" value="NZ_CP008785.1"/>
</dbReference>
<dbReference type="SMR" id="Q2SYF4"/>
<dbReference type="GeneID" id="45121240"/>
<dbReference type="KEGG" id="bte:BTH_I1499"/>
<dbReference type="HOGENOM" id="CLU_056339_0_0_4"/>
<dbReference type="Proteomes" id="UP000001930">
    <property type="component" value="Chromosome I"/>
</dbReference>
<dbReference type="GO" id="GO:0005737">
    <property type="term" value="C:cytoplasm"/>
    <property type="evidence" value="ECO:0007669"/>
    <property type="project" value="UniProtKB-SubCell"/>
</dbReference>
<dbReference type="GO" id="GO:0016151">
    <property type="term" value="F:nickel cation binding"/>
    <property type="evidence" value="ECO:0007669"/>
    <property type="project" value="UniProtKB-UniRule"/>
</dbReference>
<dbReference type="HAMAP" id="MF_01384">
    <property type="entry name" value="UreD"/>
    <property type="match status" value="1"/>
</dbReference>
<dbReference type="InterPro" id="IPR002669">
    <property type="entry name" value="UreD"/>
</dbReference>
<dbReference type="PANTHER" id="PTHR33643">
    <property type="entry name" value="UREASE ACCESSORY PROTEIN D"/>
    <property type="match status" value="1"/>
</dbReference>
<dbReference type="PANTHER" id="PTHR33643:SF1">
    <property type="entry name" value="UREASE ACCESSORY PROTEIN D"/>
    <property type="match status" value="1"/>
</dbReference>
<dbReference type="Pfam" id="PF01774">
    <property type="entry name" value="UreD"/>
    <property type="match status" value="1"/>
</dbReference>
<comment type="function">
    <text evidence="1">Required for maturation of urease via the functional incorporation of the urease nickel metallocenter.</text>
</comment>
<comment type="subunit">
    <text evidence="1">UreD, UreF and UreG form a complex that acts as a GTP-hydrolysis-dependent molecular chaperone, activating the urease apoprotein by helping to assemble the nickel containing metallocenter of UreC. The UreE protein probably delivers the nickel.</text>
</comment>
<comment type="subcellular location">
    <subcellularLocation>
        <location evidence="1">Cytoplasm</location>
    </subcellularLocation>
</comment>
<comment type="similarity">
    <text evidence="1">Belongs to the UreD family.</text>
</comment>
<comment type="sequence caution" evidence="2">
    <conflict type="erroneous initiation">
        <sequence resource="EMBL-CDS" id="ABC38588"/>
    </conflict>
</comment>